<evidence type="ECO:0000250" key="1"/>
<evidence type="ECO:0000255" key="2">
    <source>
        <dbReference type="PROSITE-ProRule" id="PRU00711"/>
    </source>
</evidence>
<evidence type="ECO:0000256" key="3">
    <source>
        <dbReference type="SAM" id="MobiDB-lite"/>
    </source>
</evidence>
<evidence type="ECO:0000305" key="4"/>
<proteinExistence type="inferred from homology"/>
<organism>
    <name type="scientific">Escherichia coli O6:H1 (strain CFT073 / ATCC 700928 / UPEC)</name>
    <dbReference type="NCBI Taxonomy" id="199310"/>
    <lineage>
        <taxon>Bacteria</taxon>
        <taxon>Pseudomonadati</taxon>
        <taxon>Pseudomonadota</taxon>
        <taxon>Gammaproteobacteria</taxon>
        <taxon>Enterobacterales</taxon>
        <taxon>Enterobacteriaceae</taxon>
        <taxon>Escherichia</taxon>
    </lineage>
</organism>
<comment type="function">
    <text evidence="1">Electron transfer subunit of the terminal reductase during anaerobic growth on various sulfoxide and N-oxide compounds.</text>
</comment>
<comment type="cofactor">
    <cofactor evidence="1">
        <name>[4Fe-4S] cluster</name>
        <dbReference type="ChEBI" id="CHEBI:49883"/>
    </cofactor>
    <text evidence="1">Binds 4 [4Fe-4S] clusters.</text>
</comment>
<comment type="subunit">
    <text evidence="4">The complex consists of three subunits: YnfF, the reductase; YnfG, an electron transfer protein, and YnfH, a membrane anchor protein.</text>
</comment>
<protein>
    <recommendedName>
        <fullName>Probable anaerobic dimethyl sulfoxide reductase chain YnfG</fullName>
    </recommendedName>
    <alternativeName>
        <fullName>DMSO reductase iron-sulfur subunit YnfG</fullName>
    </alternativeName>
</protein>
<name>YNFG_ECOL6</name>
<gene>
    <name type="primary">ynfG</name>
    <name type="ordered locus">c1979</name>
</gene>
<accession>P0AAJ2</accession>
<accession>P77313</accession>
<keyword id="KW-0004">4Fe-4S</keyword>
<keyword id="KW-0249">Electron transport</keyword>
<keyword id="KW-0408">Iron</keyword>
<keyword id="KW-0411">Iron-sulfur</keyword>
<keyword id="KW-0479">Metal-binding</keyword>
<keyword id="KW-1185">Reference proteome</keyword>
<keyword id="KW-0677">Repeat</keyword>
<keyword id="KW-0813">Transport</keyword>
<sequence length="205" mass="22752">MTTQYGFFIDSSRCTGCKTCELACKDFKDLGPEVSFRRIYEYAGGDWQEDNGVWHQNVFAYYLSISCNHCDDPACTKVCPSGAMHKREDGFVVVDEDVCIGCRYCHMACPYGAPQYNAEKGHMTKCDGCYSRVAEGKQPICVESCPLRALEFGPIEELRQKHGTLAAVAPLPRAHFTKPNIVIKPNANSRPTGDTTGYLANPEEV</sequence>
<feature type="initiator methionine" description="Removed" evidence="1">
    <location>
        <position position="1"/>
    </location>
</feature>
<feature type="chain" id="PRO_0000159245" description="Probable anaerobic dimethyl sulfoxide reductase chain YnfG">
    <location>
        <begin position="2"/>
        <end position="205"/>
    </location>
</feature>
<feature type="domain" description="4Fe-4S ferredoxin-type 1" evidence="2">
    <location>
        <begin position="5"/>
        <end position="33"/>
    </location>
</feature>
<feature type="domain" description="4Fe-4S ferredoxin-type 2" evidence="2">
    <location>
        <begin position="59"/>
        <end position="89"/>
    </location>
</feature>
<feature type="domain" description="4Fe-4S ferredoxin-type 3" evidence="2">
    <location>
        <begin position="90"/>
        <end position="119"/>
    </location>
</feature>
<feature type="region of interest" description="Disordered" evidence="3">
    <location>
        <begin position="183"/>
        <end position="205"/>
    </location>
</feature>
<feature type="compositionally biased region" description="Polar residues" evidence="3">
    <location>
        <begin position="186"/>
        <end position="195"/>
    </location>
</feature>
<feature type="binding site" evidence="1">
    <location>
        <position position="14"/>
    </location>
    <ligand>
        <name>[4Fe-4S] cluster</name>
        <dbReference type="ChEBI" id="CHEBI:49883"/>
        <label>1</label>
    </ligand>
</feature>
<feature type="binding site" evidence="1">
    <location>
        <position position="17"/>
    </location>
    <ligand>
        <name>[4Fe-4S] cluster</name>
        <dbReference type="ChEBI" id="CHEBI:49883"/>
        <label>1</label>
    </ligand>
</feature>
<feature type="binding site" evidence="1">
    <location>
        <position position="20"/>
    </location>
    <ligand>
        <name>[4Fe-4S] cluster</name>
        <dbReference type="ChEBI" id="CHEBI:49883"/>
        <label>1</label>
    </ligand>
</feature>
<feature type="binding site" evidence="1">
    <location>
        <position position="24"/>
    </location>
    <ligand>
        <name>[4Fe-4S] cluster</name>
        <dbReference type="ChEBI" id="CHEBI:49883"/>
        <label>2</label>
    </ligand>
</feature>
<feature type="binding site" evidence="1">
    <location>
        <position position="67"/>
    </location>
    <ligand>
        <name>[4Fe-4S] cluster</name>
        <dbReference type="ChEBI" id="CHEBI:49883"/>
        <label>3</label>
    </ligand>
</feature>
<feature type="binding site" evidence="1">
    <location>
        <position position="70"/>
    </location>
    <ligand>
        <name>[4Fe-4S] cluster</name>
        <dbReference type="ChEBI" id="CHEBI:49883"/>
        <label>3</label>
    </ligand>
</feature>
<feature type="binding site" evidence="1">
    <location>
        <position position="75"/>
    </location>
    <ligand>
        <name>[4Fe-4S] cluster</name>
        <dbReference type="ChEBI" id="CHEBI:49883"/>
        <label>3</label>
    </ligand>
</feature>
<feature type="binding site" evidence="1">
    <location>
        <position position="79"/>
    </location>
    <ligand>
        <name>[4Fe-4S] cluster</name>
        <dbReference type="ChEBI" id="CHEBI:49883"/>
        <label>4</label>
    </ligand>
</feature>
<feature type="binding site" evidence="1">
    <location>
        <position position="99"/>
    </location>
    <ligand>
        <name>[4Fe-4S] cluster</name>
        <dbReference type="ChEBI" id="CHEBI:49883"/>
        <label>4</label>
    </ligand>
</feature>
<feature type="binding site" evidence="1">
    <location>
        <position position="102"/>
    </location>
    <ligand>
        <name>[4Fe-4S] cluster</name>
        <dbReference type="ChEBI" id="CHEBI:49883"/>
        <label>4</label>
    </ligand>
</feature>
<feature type="binding site" evidence="1">
    <location>
        <position position="105"/>
    </location>
    <ligand>
        <name>[4Fe-4S] cluster</name>
        <dbReference type="ChEBI" id="CHEBI:49883"/>
        <label>4</label>
    </ligand>
</feature>
<feature type="binding site" evidence="1">
    <location>
        <position position="109"/>
    </location>
    <ligand>
        <name>[4Fe-4S] cluster</name>
        <dbReference type="ChEBI" id="CHEBI:49883"/>
        <label>3</label>
    </ligand>
</feature>
<feature type="binding site" evidence="1">
    <location>
        <position position="126"/>
    </location>
    <ligand>
        <name>[4Fe-4S] cluster</name>
        <dbReference type="ChEBI" id="CHEBI:49883"/>
        <label>2</label>
    </ligand>
</feature>
<feature type="binding site" evidence="1">
    <location>
        <position position="129"/>
    </location>
    <ligand>
        <name>[4Fe-4S] cluster</name>
        <dbReference type="ChEBI" id="CHEBI:49883"/>
        <label>2</label>
    </ligand>
</feature>
<feature type="binding site" evidence="1">
    <location>
        <position position="141"/>
    </location>
    <ligand>
        <name>[4Fe-4S] cluster</name>
        <dbReference type="ChEBI" id="CHEBI:49883"/>
        <label>2</label>
    </ligand>
</feature>
<feature type="binding site" evidence="1">
    <location>
        <position position="145"/>
    </location>
    <ligand>
        <name>[4Fe-4S] cluster</name>
        <dbReference type="ChEBI" id="CHEBI:49883"/>
        <label>1</label>
    </ligand>
</feature>
<reference key="1">
    <citation type="journal article" date="2002" name="Proc. Natl. Acad. Sci. U.S.A.">
        <title>Extensive mosaic structure revealed by the complete genome sequence of uropathogenic Escherichia coli.</title>
        <authorList>
            <person name="Welch R.A."/>
            <person name="Burland V."/>
            <person name="Plunkett G. III"/>
            <person name="Redford P."/>
            <person name="Roesch P."/>
            <person name="Rasko D."/>
            <person name="Buckles E.L."/>
            <person name="Liou S.-R."/>
            <person name="Boutin A."/>
            <person name="Hackett J."/>
            <person name="Stroud D."/>
            <person name="Mayhew G.F."/>
            <person name="Rose D.J."/>
            <person name="Zhou S."/>
            <person name="Schwartz D.C."/>
            <person name="Perna N.T."/>
            <person name="Mobley H.L.T."/>
            <person name="Donnenberg M.S."/>
            <person name="Blattner F.R."/>
        </authorList>
    </citation>
    <scope>NUCLEOTIDE SEQUENCE [LARGE SCALE GENOMIC DNA]</scope>
    <source>
        <strain>CFT073 / ATCC 700928 / UPEC</strain>
    </source>
</reference>
<dbReference type="EMBL" id="AE014075">
    <property type="protein sequence ID" value="AAN80439.1"/>
    <property type="molecule type" value="Genomic_DNA"/>
</dbReference>
<dbReference type="RefSeq" id="WP_000213028.1">
    <property type="nucleotide sequence ID" value="NZ_CP051263.1"/>
</dbReference>
<dbReference type="SMR" id="P0AAJ2"/>
<dbReference type="STRING" id="199310.c1979"/>
<dbReference type="GeneID" id="75204432"/>
<dbReference type="KEGG" id="ecc:c1979"/>
<dbReference type="eggNOG" id="COG0437">
    <property type="taxonomic scope" value="Bacteria"/>
</dbReference>
<dbReference type="HOGENOM" id="CLU_043374_2_0_6"/>
<dbReference type="BioCyc" id="ECOL199310:C1979-MONOMER"/>
<dbReference type="Proteomes" id="UP000001410">
    <property type="component" value="Chromosome"/>
</dbReference>
<dbReference type="GO" id="GO:0051539">
    <property type="term" value="F:4 iron, 4 sulfur cluster binding"/>
    <property type="evidence" value="ECO:0007669"/>
    <property type="project" value="UniProtKB-KW"/>
</dbReference>
<dbReference type="GO" id="GO:0046872">
    <property type="term" value="F:metal ion binding"/>
    <property type="evidence" value="ECO:0007669"/>
    <property type="project" value="UniProtKB-KW"/>
</dbReference>
<dbReference type="CDD" id="cd16371">
    <property type="entry name" value="DMSOR_beta_like"/>
    <property type="match status" value="1"/>
</dbReference>
<dbReference type="FunFam" id="3.30.70.20:FF:000003">
    <property type="entry name" value="Dimethyl sulfoxide reductase subunit B"/>
    <property type="match status" value="1"/>
</dbReference>
<dbReference type="Gene3D" id="3.30.70.20">
    <property type="match status" value="2"/>
</dbReference>
<dbReference type="InterPro" id="IPR017896">
    <property type="entry name" value="4Fe4S_Fe-S-bd"/>
</dbReference>
<dbReference type="InterPro" id="IPR017900">
    <property type="entry name" value="4Fe4S_Fe_S_CS"/>
</dbReference>
<dbReference type="InterPro" id="IPR014297">
    <property type="entry name" value="DMSO_DmsB"/>
</dbReference>
<dbReference type="InterPro" id="IPR050954">
    <property type="entry name" value="ET_IronSulfur_Cluster-Binding"/>
</dbReference>
<dbReference type="NCBIfam" id="TIGR02951">
    <property type="entry name" value="DMSO_dmsB"/>
    <property type="match status" value="1"/>
</dbReference>
<dbReference type="PANTHER" id="PTHR43177:SF5">
    <property type="entry name" value="ANAEROBIC DIMETHYL SULFOXIDE REDUCTASE CHAIN B-RELATED"/>
    <property type="match status" value="1"/>
</dbReference>
<dbReference type="PANTHER" id="PTHR43177">
    <property type="entry name" value="PROTEIN NRFC"/>
    <property type="match status" value="1"/>
</dbReference>
<dbReference type="Pfam" id="PF13247">
    <property type="entry name" value="Fer4_11"/>
    <property type="match status" value="1"/>
</dbReference>
<dbReference type="Pfam" id="PF12797">
    <property type="entry name" value="Fer4_2"/>
    <property type="match status" value="1"/>
</dbReference>
<dbReference type="SUPFAM" id="SSF54862">
    <property type="entry name" value="4Fe-4S ferredoxins"/>
    <property type="match status" value="1"/>
</dbReference>
<dbReference type="PROSITE" id="PS00198">
    <property type="entry name" value="4FE4S_FER_1"/>
    <property type="match status" value="1"/>
</dbReference>
<dbReference type="PROSITE" id="PS51379">
    <property type="entry name" value="4FE4S_FER_2"/>
    <property type="match status" value="3"/>
</dbReference>